<protein>
    <recommendedName>
        <fullName>Meiotically up-regulated gene 183 protein</fullName>
    </recommendedName>
</protein>
<gene>
    <name type="primary">mug183</name>
    <name type="ORF">SPAC6G9.03c</name>
</gene>
<reference key="1">
    <citation type="journal article" date="2002" name="Nature">
        <title>The genome sequence of Schizosaccharomyces pombe.</title>
        <authorList>
            <person name="Wood V."/>
            <person name="Gwilliam R."/>
            <person name="Rajandream M.A."/>
            <person name="Lyne M.H."/>
            <person name="Lyne R."/>
            <person name="Stewart A."/>
            <person name="Sgouros J.G."/>
            <person name="Peat N."/>
            <person name="Hayles J."/>
            <person name="Baker S.G."/>
            <person name="Basham D."/>
            <person name="Bowman S."/>
            <person name="Brooks K."/>
            <person name="Brown D."/>
            <person name="Brown S."/>
            <person name="Chillingworth T."/>
            <person name="Churcher C.M."/>
            <person name="Collins M."/>
            <person name="Connor R."/>
            <person name="Cronin A."/>
            <person name="Davis P."/>
            <person name="Feltwell T."/>
            <person name="Fraser A."/>
            <person name="Gentles S."/>
            <person name="Goble A."/>
            <person name="Hamlin N."/>
            <person name="Harris D.E."/>
            <person name="Hidalgo J."/>
            <person name="Hodgson G."/>
            <person name="Holroyd S."/>
            <person name="Hornsby T."/>
            <person name="Howarth S."/>
            <person name="Huckle E.J."/>
            <person name="Hunt S."/>
            <person name="Jagels K."/>
            <person name="James K.D."/>
            <person name="Jones L."/>
            <person name="Jones M."/>
            <person name="Leather S."/>
            <person name="McDonald S."/>
            <person name="McLean J."/>
            <person name="Mooney P."/>
            <person name="Moule S."/>
            <person name="Mungall K.L."/>
            <person name="Murphy L.D."/>
            <person name="Niblett D."/>
            <person name="Odell C."/>
            <person name="Oliver K."/>
            <person name="O'Neil S."/>
            <person name="Pearson D."/>
            <person name="Quail M.A."/>
            <person name="Rabbinowitsch E."/>
            <person name="Rutherford K.M."/>
            <person name="Rutter S."/>
            <person name="Saunders D."/>
            <person name="Seeger K."/>
            <person name="Sharp S."/>
            <person name="Skelton J."/>
            <person name="Simmonds M.N."/>
            <person name="Squares R."/>
            <person name="Squares S."/>
            <person name="Stevens K."/>
            <person name="Taylor K."/>
            <person name="Taylor R.G."/>
            <person name="Tivey A."/>
            <person name="Walsh S.V."/>
            <person name="Warren T."/>
            <person name="Whitehead S."/>
            <person name="Woodward J.R."/>
            <person name="Volckaert G."/>
            <person name="Aert R."/>
            <person name="Robben J."/>
            <person name="Grymonprez B."/>
            <person name="Weltjens I."/>
            <person name="Vanstreels E."/>
            <person name="Rieger M."/>
            <person name="Schaefer M."/>
            <person name="Mueller-Auer S."/>
            <person name="Gabel C."/>
            <person name="Fuchs M."/>
            <person name="Duesterhoeft A."/>
            <person name="Fritzc C."/>
            <person name="Holzer E."/>
            <person name="Moestl D."/>
            <person name="Hilbert H."/>
            <person name="Borzym K."/>
            <person name="Langer I."/>
            <person name="Beck A."/>
            <person name="Lehrach H."/>
            <person name="Reinhardt R."/>
            <person name="Pohl T.M."/>
            <person name="Eger P."/>
            <person name="Zimmermann W."/>
            <person name="Wedler H."/>
            <person name="Wambutt R."/>
            <person name="Purnelle B."/>
            <person name="Goffeau A."/>
            <person name="Cadieu E."/>
            <person name="Dreano S."/>
            <person name="Gloux S."/>
            <person name="Lelaure V."/>
            <person name="Mottier S."/>
            <person name="Galibert F."/>
            <person name="Aves S.J."/>
            <person name="Xiang Z."/>
            <person name="Hunt C."/>
            <person name="Moore K."/>
            <person name="Hurst S.M."/>
            <person name="Lucas M."/>
            <person name="Rochet M."/>
            <person name="Gaillardin C."/>
            <person name="Tallada V.A."/>
            <person name="Garzon A."/>
            <person name="Thode G."/>
            <person name="Daga R.R."/>
            <person name="Cruzado L."/>
            <person name="Jimenez J."/>
            <person name="Sanchez M."/>
            <person name="del Rey F."/>
            <person name="Benito J."/>
            <person name="Dominguez A."/>
            <person name="Revuelta J.L."/>
            <person name="Moreno S."/>
            <person name="Armstrong J."/>
            <person name="Forsburg S.L."/>
            <person name="Cerutti L."/>
            <person name="Lowe T."/>
            <person name="McCombie W.R."/>
            <person name="Paulsen I."/>
            <person name="Potashkin J."/>
            <person name="Shpakovski G.V."/>
            <person name="Ussery D."/>
            <person name="Barrell B.G."/>
            <person name="Nurse P."/>
        </authorList>
    </citation>
    <scope>NUCLEOTIDE SEQUENCE [LARGE SCALE GENOMIC DNA]</scope>
    <source>
        <strain>972 / ATCC 24843</strain>
    </source>
</reference>
<reference key="2">
    <citation type="journal article" date="2011" name="Science">
        <title>Comparative functional genomics of the fission yeasts.</title>
        <authorList>
            <person name="Rhind N."/>
            <person name="Chen Z."/>
            <person name="Yassour M."/>
            <person name="Thompson D.A."/>
            <person name="Haas B.J."/>
            <person name="Habib N."/>
            <person name="Wapinski I."/>
            <person name="Roy S."/>
            <person name="Lin M.F."/>
            <person name="Heiman D.I."/>
            <person name="Young S.K."/>
            <person name="Furuya K."/>
            <person name="Guo Y."/>
            <person name="Pidoux A."/>
            <person name="Chen H.M."/>
            <person name="Robbertse B."/>
            <person name="Goldberg J.M."/>
            <person name="Aoki K."/>
            <person name="Bayne E.H."/>
            <person name="Berlin A.M."/>
            <person name="Desjardins C.A."/>
            <person name="Dobbs E."/>
            <person name="Dukaj L."/>
            <person name="Fan L."/>
            <person name="FitzGerald M.G."/>
            <person name="French C."/>
            <person name="Gujja S."/>
            <person name="Hansen K."/>
            <person name="Keifenheim D."/>
            <person name="Levin J.Z."/>
            <person name="Mosher R.A."/>
            <person name="Mueller C.A."/>
            <person name="Pfiffner J."/>
            <person name="Priest M."/>
            <person name="Russ C."/>
            <person name="Smialowska A."/>
            <person name="Swoboda P."/>
            <person name="Sykes S.M."/>
            <person name="Vaughn M."/>
            <person name="Vengrova S."/>
            <person name="Yoder R."/>
            <person name="Zeng Q."/>
            <person name="Allshire R."/>
            <person name="Baulcombe D."/>
            <person name="Birren B.W."/>
            <person name="Brown W."/>
            <person name="Ekwall K."/>
            <person name="Kellis M."/>
            <person name="Leatherwood J."/>
            <person name="Levin H."/>
            <person name="Margalit H."/>
            <person name="Martienssen R."/>
            <person name="Nieduszynski C.A."/>
            <person name="Spatafora J.W."/>
            <person name="Friedman N."/>
            <person name="Dalgaard J.Z."/>
            <person name="Baumann P."/>
            <person name="Niki H."/>
            <person name="Regev A."/>
            <person name="Nusbaum C."/>
        </authorList>
    </citation>
    <scope>REVISION OF GENE MODEL</scope>
</reference>
<reference key="3">
    <citation type="journal article" date="2005" name="Curr. Biol.">
        <title>A large-scale screen in S. pombe identifies seven novel genes required for critical meiotic events.</title>
        <authorList>
            <person name="Martin-Castellanos C."/>
            <person name="Blanco M."/>
            <person name="Rozalen A.E."/>
            <person name="Perez-Hidalgo L."/>
            <person name="Garcia A.I."/>
            <person name="Conde F."/>
            <person name="Mata J."/>
            <person name="Ellermeier C."/>
            <person name="Davis L."/>
            <person name="San-Segundo P."/>
            <person name="Smith G.R."/>
            <person name="Moreno S."/>
        </authorList>
    </citation>
    <scope>FUNCTION IN MEIOSIS</scope>
</reference>
<feature type="chain" id="PRO_0000116627" description="Meiotically up-regulated gene 183 protein">
    <location>
        <begin position="1"/>
        <end position="376"/>
    </location>
</feature>
<feature type="region of interest" description="Disordered" evidence="1">
    <location>
        <begin position="334"/>
        <end position="376"/>
    </location>
</feature>
<feature type="compositionally biased region" description="Acidic residues" evidence="1">
    <location>
        <begin position="353"/>
        <end position="376"/>
    </location>
</feature>
<proteinExistence type="evidence at protein level"/>
<keyword id="KW-0469">Meiosis</keyword>
<keyword id="KW-1185">Reference proteome</keyword>
<accession>Q92348</accession>
<comment type="function">
    <text evidence="2">Has a role in meiosis.</text>
</comment>
<comment type="similarity">
    <text evidence="3">Belongs to the RTT106 family.</text>
</comment>
<name>MU183_SCHPO</name>
<sequence>MESNVNDEIEKAFAKDSELAKDIIKQYGKTKSIQPLVHRICKYINTLQKENESGQVKEAGSLKRKDRVQHELGQLVYGVLNLSFQAPMRKKLDVYIYENGIAVTLPGEPNLIEFWLPWNEIRCAIHVPCPRKANVQNNFVIILKSESSAENIVSSDNVKEPVFFTAPYPLKKLNLVEGLRSFTHCTNSWDIFRDYFEFIGTSTLSPSVEEFVCPNPQTGDNGTTYGVEANYKAKDGHLFFLRTGILWGFRKPILFIELASIQHFSYSNVLQRTFTVNFEAGGTIYSFDMVDQSVFRAVNDYATKHGLMDSSLAEEKAAPVPKNPSVSYLNEASSLENVDDMDDIDVKEPLFSDNDEDVENSDSEDGSESIGSEDEE</sequence>
<evidence type="ECO:0000256" key="1">
    <source>
        <dbReference type="SAM" id="MobiDB-lite"/>
    </source>
</evidence>
<evidence type="ECO:0000269" key="2">
    <source>
    </source>
</evidence>
<evidence type="ECO:0000305" key="3"/>
<organism>
    <name type="scientific">Schizosaccharomyces pombe (strain 972 / ATCC 24843)</name>
    <name type="common">Fission yeast</name>
    <dbReference type="NCBI Taxonomy" id="284812"/>
    <lineage>
        <taxon>Eukaryota</taxon>
        <taxon>Fungi</taxon>
        <taxon>Dikarya</taxon>
        <taxon>Ascomycota</taxon>
        <taxon>Taphrinomycotina</taxon>
        <taxon>Schizosaccharomycetes</taxon>
        <taxon>Schizosaccharomycetales</taxon>
        <taxon>Schizosaccharomycetaceae</taxon>
        <taxon>Schizosaccharomyces</taxon>
    </lineage>
</organism>
<dbReference type="EMBL" id="CU329670">
    <property type="protein sequence ID" value="CAB03605.2"/>
    <property type="molecule type" value="Genomic_DNA"/>
</dbReference>
<dbReference type="PIR" id="T39065">
    <property type="entry name" value="T39065"/>
</dbReference>
<dbReference type="RefSeq" id="NP_594112.2">
    <property type="nucleotide sequence ID" value="NM_001019536.2"/>
</dbReference>
<dbReference type="SMR" id="Q92348"/>
<dbReference type="BioGRID" id="278534">
    <property type="interactions" value="29"/>
</dbReference>
<dbReference type="FunCoup" id="Q92348">
    <property type="interactions" value="100"/>
</dbReference>
<dbReference type="STRING" id="284812.Q92348"/>
<dbReference type="PaxDb" id="4896-SPAC6G9.03c.1"/>
<dbReference type="EnsemblFungi" id="SPAC6G9.03c.1">
    <property type="protein sequence ID" value="SPAC6G9.03c.1:pep"/>
    <property type="gene ID" value="SPAC6G9.03c"/>
</dbReference>
<dbReference type="GeneID" id="2542055"/>
<dbReference type="KEGG" id="spo:2542055"/>
<dbReference type="PomBase" id="SPAC6G9.03c">
    <property type="gene designation" value="mug183"/>
</dbReference>
<dbReference type="VEuPathDB" id="FungiDB:SPAC6G9.03c"/>
<dbReference type="eggNOG" id="ENOG502R9PE">
    <property type="taxonomic scope" value="Eukaryota"/>
</dbReference>
<dbReference type="HOGENOM" id="CLU_744248_0_0_1"/>
<dbReference type="InParanoid" id="Q92348"/>
<dbReference type="OMA" id="AMPEAHR"/>
<dbReference type="PRO" id="PR:Q92348"/>
<dbReference type="Proteomes" id="UP000002485">
    <property type="component" value="Chromosome I"/>
</dbReference>
<dbReference type="GO" id="GO:0000785">
    <property type="term" value="C:chromatin"/>
    <property type="evidence" value="ECO:0000305"/>
    <property type="project" value="PomBase"/>
</dbReference>
<dbReference type="GO" id="GO:0005634">
    <property type="term" value="C:nucleus"/>
    <property type="evidence" value="ECO:0000266"/>
    <property type="project" value="PomBase"/>
</dbReference>
<dbReference type="GO" id="GO:0000510">
    <property type="term" value="F:H3-H4 histone complex chaperone activity"/>
    <property type="evidence" value="ECO:0000305"/>
    <property type="project" value="PomBase"/>
</dbReference>
<dbReference type="GO" id="GO:0042393">
    <property type="term" value="F:histone binding"/>
    <property type="evidence" value="ECO:0000318"/>
    <property type="project" value="GO_Central"/>
</dbReference>
<dbReference type="GO" id="GO:0031491">
    <property type="term" value="F:nucleosome binding"/>
    <property type="evidence" value="ECO:0000318"/>
    <property type="project" value="GO_Central"/>
</dbReference>
<dbReference type="GO" id="GO:0140861">
    <property type="term" value="P:DNA repair-dependent chromatin remodeling"/>
    <property type="evidence" value="ECO:0000250"/>
    <property type="project" value="PomBase"/>
</dbReference>
<dbReference type="GO" id="GO:0051321">
    <property type="term" value="P:meiotic cell cycle"/>
    <property type="evidence" value="ECO:0007669"/>
    <property type="project" value="UniProtKB-KW"/>
</dbReference>
<dbReference type="GO" id="GO:0140673">
    <property type="term" value="P:transcription elongation-coupled chromatin remodeling"/>
    <property type="evidence" value="ECO:0000250"/>
    <property type="project" value="PomBase"/>
</dbReference>
<dbReference type="Gene3D" id="2.30.29.30">
    <property type="entry name" value="Pleckstrin-homology domain (PH domain)/Phosphotyrosine-binding domain (PTB)"/>
    <property type="match status" value="1"/>
</dbReference>
<dbReference type="InterPro" id="IPR011993">
    <property type="entry name" value="PH-like_dom_sf"/>
</dbReference>
<dbReference type="InterPro" id="IPR013719">
    <property type="entry name" value="RTT106/SPT16-like_middle_dom"/>
</dbReference>
<dbReference type="InterPro" id="IPR050454">
    <property type="entry name" value="RTT106/SSRP1_HistChap/FACT"/>
</dbReference>
<dbReference type="PANTHER" id="PTHR45849">
    <property type="entry name" value="FACT COMPLEX SUBUNIT SSRP1"/>
    <property type="match status" value="1"/>
</dbReference>
<dbReference type="PANTHER" id="PTHR45849:SF3">
    <property type="entry name" value="HISTONE CHAPERONE RTT106"/>
    <property type="match status" value="1"/>
</dbReference>
<dbReference type="Pfam" id="PF08512">
    <property type="entry name" value="Rttp106-like_middle"/>
    <property type="match status" value="1"/>
</dbReference>
<dbReference type="SMART" id="SM01287">
    <property type="entry name" value="Rtt106"/>
    <property type="match status" value="1"/>
</dbReference>
<dbReference type="SUPFAM" id="SSF50729">
    <property type="entry name" value="PH domain-like"/>
    <property type="match status" value="1"/>
</dbReference>